<reference key="1">
    <citation type="journal article" date="2014" name="Plant J.">
        <title>The plant glycosyltransferase clone collection for functional genomics.</title>
        <authorList>
            <person name="Lao J."/>
            <person name="Oikawa A."/>
            <person name="Bromley J.R."/>
            <person name="McInerney P."/>
            <person name="Suttangkakul A."/>
            <person name="Smith-Moritz A.M."/>
            <person name="Plahar H."/>
            <person name="Chiu T.-Y."/>
            <person name="Gonzalez Fernandez-Nino S.M.G."/>
            <person name="Ebert B."/>
            <person name="Yang F."/>
            <person name="Christiansen K.M."/>
            <person name="Hansen S.F."/>
            <person name="Stonebloom S."/>
            <person name="Adams P.D."/>
            <person name="Ronald P.C."/>
            <person name="Hillson N.J."/>
            <person name="Hadi M.Z."/>
            <person name="Vega-Sanchez M.E."/>
            <person name="Loque D."/>
            <person name="Scheller H.V."/>
            <person name="Heazlewood J.L."/>
        </authorList>
    </citation>
    <scope>NUCLEOTIDE SEQUENCE [MRNA]</scope>
    <source>
        <strain>cv. Columbia</strain>
    </source>
</reference>
<reference key="2">
    <citation type="journal article" date="1999" name="Nature">
        <title>Sequence and analysis of chromosome 4 of the plant Arabidopsis thaliana.</title>
        <authorList>
            <person name="Mayer K.F.X."/>
            <person name="Schueller C."/>
            <person name="Wambutt R."/>
            <person name="Murphy G."/>
            <person name="Volckaert G."/>
            <person name="Pohl T."/>
            <person name="Duesterhoeft A."/>
            <person name="Stiekema W."/>
            <person name="Entian K.-D."/>
            <person name="Terryn N."/>
            <person name="Harris B."/>
            <person name="Ansorge W."/>
            <person name="Brandt P."/>
            <person name="Grivell L.A."/>
            <person name="Rieger M."/>
            <person name="Weichselgartner M."/>
            <person name="de Simone V."/>
            <person name="Obermaier B."/>
            <person name="Mache R."/>
            <person name="Mueller M."/>
            <person name="Kreis M."/>
            <person name="Delseny M."/>
            <person name="Puigdomenech P."/>
            <person name="Watson M."/>
            <person name="Schmidtheini T."/>
            <person name="Reichert B."/>
            <person name="Portetelle D."/>
            <person name="Perez-Alonso M."/>
            <person name="Boutry M."/>
            <person name="Bancroft I."/>
            <person name="Vos P."/>
            <person name="Hoheisel J."/>
            <person name="Zimmermann W."/>
            <person name="Wedler H."/>
            <person name="Ridley P."/>
            <person name="Langham S.-A."/>
            <person name="McCullagh B."/>
            <person name="Bilham L."/>
            <person name="Robben J."/>
            <person name="van der Schueren J."/>
            <person name="Grymonprez B."/>
            <person name="Chuang Y.-J."/>
            <person name="Vandenbussche F."/>
            <person name="Braeken M."/>
            <person name="Weltjens I."/>
            <person name="Voet M."/>
            <person name="Bastiaens I."/>
            <person name="Aert R."/>
            <person name="Defoor E."/>
            <person name="Weitzenegger T."/>
            <person name="Bothe G."/>
            <person name="Ramsperger U."/>
            <person name="Hilbert H."/>
            <person name="Braun M."/>
            <person name="Holzer E."/>
            <person name="Brandt A."/>
            <person name="Peters S."/>
            <person name="van Staveren M."/>
            <person name="Dirkse W."/>
            <person name="Mooijman P."/>
            <person name="Klein Lankhorst R."/>
            <person name="Rose M."/>
            <person name="Hauf J."/>
            <person name="Koetter P."/>
            <person name="Berneiser S."/>
            <person name="Hempel S."/>
            <person name="Feldpausch M."/>
            <person name="Lamberth S."/>
            <person name="Van den Daele H."/>
            <person name="De Keyser A."/>
            <person name="Buysshaert C."/>
            <person name="Gielen J."/>
            <person name="Villarroel R."/>
            <person name="De Clercq R."/>
            <person name="van Montagu M."/>
            <person name="Rogers J."/>
            <person name="Cronin A."/>
            <person name="Quail M.A."/>
            <person name="Bray-Allen S."/>
            <person name="Clark L."/>
            <person name="Doggett J."/>
            <person name="Hall S."/>
            <person name="Kay M."/>
            <person name="Lennard N."/>
            <person name="McLay K."/>
            <person name="Mayes R."/>
            <person name="Pettett A."/>
            <person name="Rajandream M.A."/>
            <person name="Lyne M."/>
            <person name="Benes V."/>
            <person name="Rechmann S."/>
            <person name="Borkova D."/>
            <person name="Bloecker H."/>
            <person name="Scharfe M."/>
            <person name="Grimm M."/>
            <person name="Loehnert T.-H."/>
            <person name="Dose S."/>
            <person name="de Haan M."/>
            <person name="Maarse A.C."/>
            <person name="Schaefer M."/>
            <person name="Mueller-Auer S."/>
            <person name="Gabel C."/>
            <person name="Fuchs M."/>
            <person name="Fartmann B."/>
            <person name="Granderath K."/>
            <person name="Dauner D."/>
            <person name="Herzl A."/>
            <person name="Neumann S."/>
            <person name="Argiriou A."/>
            <person name="Vitale D."/>
            <person name="Liguori R."/>
            <person name="Piravandi E."/>
            <person name="Massenet O."/>
            <person name="Quigley F."/>
            <person name="Clabauld G."/>
            <person name="Muendlein A."/>
            <person name="Felber R."/>
            <person name="Schnabl S."/>
            <person name="Hiller R."/>
            <person name="Schmidt W."/>
            <person name="Lecharny A."/>
            <person name="Aubourg S."/>
            <person name="Chefdor F."/>
            <person name="Cooke R."/>
            <person name="Berger C."/>
            <person name="Monfort A."/>
            <person name="Casacuberta E."/>
            <person name="Gibbons T."/>
            <person name="Weber N."/>
            <person name="Vandenbol M."/>
            <person name="Bargues M."/>
            <person name="Terol J."/>
            <person name="Torres A."/>
            <person name="Perez-Perez A."/>
            <person name="Purnelle B."/>
            <person name="Bent E."/>
            <person name="Johnson S."/>
            <person name="Tacon D."/>
            <person name="Jesse T."/>
            <person name="Heijnen L."/>
            <person name="Schwarz S."/>
            <person name="Scholler P."/>
            <person name="Heber S."/>
            <person name="Francs P."/>
            <person name="Bielke C."/>
            <person name="Frishman D."/>
            <person name="Haase D."/>
            <person name="Lemcke K."/>
            <person name="Mewes H.-W."/>
            <person name="Stocker S."/>
            <person name="Zaccaria P."/>
            <person name="Bevan M."/>
            <person name="Wilson R.K."/>
            <person name="de la Bastide M."/>
            <person name="Habermann K."/>
            <person name="Parnell L."/>
            <person name="Dedhia N."/>
            <person name="Gnoj L."/>
            <person name="Schutz K."/>
            <person name="Huang E."/>
            <person name="Spiegel L."/>
            <person name="Sekhon M."/>
            <person name="Murray J."/>
            <person name="Sheet P."/>
            <person name="Cordes M."/>
            <person name="Abu-Threideh J."/>
            <person name="Stoneking T."/>
            <person name="Kalicki J."/>
            <person name="Graves T."/>
            <person name="Harmon G."/>
            <person name="Edwards J."/>
            <person name="Latreille P."/>
            <person name="Courtney L."/>
            <person name="Cloud J."/>
            <person name="Abbott A."/>
            <person name="Scott K."/>
            <person name="Johnson D."/>
            <person name="Minx P."/>
            <person name="Bentley D."/>
            <person name="Fulton B."/>
            <person name="Miller N."/>
            <person name="Greco T."/>
            <person name="Kemp K."/>
            <person name="Kramer J."/>
            <person name="Fulton L."/>
            <person name="Mardis E."/>
            <person name="Dante M."/>
            <person name="Pepin K."/>
            <person name="Hillier L.W."/>
            <person name="Nelson J."/>
            <person name="Spieth J."/>
            <person name="Ryan E."/>
            <person name="Andrews S."/>
            <person name="Geisel C."/>
            <person name="Layman D."/>
            <person name="Du H."/>
            <person name="Ali J."/>
            <person name="Berghoff A."/>
            <person name="Jones K."/>
            <person name="Drone K."/>
            <person name="Cotton M."/>
            <person name="Joshu C."/>
            <person name="Antonoiu B."/>
            <person name="Zidanic M."/>
            <person name="Strong C."/>
            <person name="Sun H."/>
            <person name="Lamar B."/>
            <person name="Yordan C."/>
            <person name="Ma P."/>
            <person name="Zhong J."/>
            <person name="Preston R."/>
            <person name="Vil D."/>
            <person name="Shekher M."/>
            <person name="Matero A."/>
            <person name="Shah R."/>
            <person name="Swaby I.K."/>
            <person name="O'Shaughnessy A."/>
            <person name="Rodriguez M."/>
            <person name="Hoffman J."/>
            <person name="Till S."/>
            <person name="Granat S."/>
            <person name="Shohdy N."/>
            <person name="Hasegawa A."/>
            <person name="Hameed A."/>
            <person name="Lodhi M."/>
            <person name="Johnson A."/>
            <person name="Chen E."/>
            <person name="Marra M.A."/>
            <person name="Martienssen R."/>
            <person name="McCombie W.R."/>
        </authorList>
    </citation>
    <scope>NUCLEOTIDE SEQUENCE [LARGE SCALE GENOMIC DNA]</scope>
    <source>
        <strain>cv. Columbia</strain>
    </source>
</reference>
<reference key="3">
    <citation type="journal article" date="2017" name="Plant J.">
        <title>Araport11: a complete reannotation of the Arabidopsis thaliana reference genome.</title>
        <authorList>
            <person name="Cheng C.Y."/>
            <person name="Krishnakumar V."/>
            <person name="Chan A.P."/>
            <person name="Thibaud-Nissen F."/>
            <person name="Schobel S."/>
            <person name="Town C.D."/>
        </authorList>
    </citation>
    <scope>GENOME REANNOTATION</scope>
    <source>
        <strain>cv. Columbia</strain>
    </source>
</reference>
<reference key="4">
    <citation type="submission" date="2004-04" db="EMBL/GenBank/DDBJ databases">
        <title>Arabidopsis ORF clones.</title>
        <authorList>
            <person name="Kim C.J."/>
            <person name="Chen H."/>
            <person name="Cheuk R.F."/>
            <person name="Shinn P."/>
            <person name="Ecker J.R."/>
        </authorList>
    </citation>
    <scope>NUCLEOTIDE SEQUENCE [MRNA]</scope>
    <source>
        <strain>cv. Columbia</strain>
    </source>
</reference>
<reference key="5">
    <citation type="submission" date="2006-07" db="EMBL/GenBank/DDBJ databases">
        <title>Large-scale analysis of RIKEN Arabidopsis full-length (RAFL) cDNAs.</title>
        <authorList>
            <person name="Totoki Y."/>
            <person name="Seki M."/>
            <person name="Ishida J."/>
            <person name="Nakajima M."/>
            <person name="Enju A."/>
            <person name="Kamiya A."/>
            <person name="Narusaka M."/>
            <person name="Shin-i T."/>
            <person name="Nakagawa M."/>
            <person name="Sakamoto N."/>
            <person name="Oishi K."/>
            <person name="Kohara Y."/>
            <person name="Kobayashi M."/>
            <person name="Toyoda A."/>
            <person name="Sakaki Y."/>
            <person name="Sakurai T."/>
            <person name="Iida K."/>
            <person name="Akiyama K."/>
            <person name="Satou M."/>
            <person name="Toyoda T."/>
            <person name="Konagaya A."/>
            <person name="Carninci P."/>
            <person name="Kawai J."/>
            <person name="Hayashizaki Y."/>
            <person name="Shinozaki K."/>
        </authorList>
    </citation>
    <scope>NUCLEOTIDE SEQUENCE [LARGE SCALE MRNA]</scope>
    <source>
        <strain>cv. Columbia</strain>
    </source>
</reference>
<reference key="6">
    <citation type="journal article" date="2004" name="Plant Physiol.">
        <title>Molecular analysis of 10 coding regions from Arabidopsis that are homologous to the MUR3 xyloglucan galactosyltransferase.</title>
        <authorList>
            <person name="Li X."/>
            <person name="Cordero I."/>
            <person name="Caplan J."/>
            <person name="Moelhoej M."/>
            <person name="Reiter W.D."/>
        </authorList>
    </citation>
    <scope>TISSUE SPECIFICITY</scope>
</reference>
<comment type="function">
    <text evidence="1">Functions in xyloglucan synthesis by adding side chains to the xylosylated glucan backbone. Involved in the galactosylation of hemicellulose xyloglucan.</text>
</comment>
<comment type="subcellular location">
    <subcellularLocation>
        <location evidence="2">Golgi apparatus membrane</location>
        <topology evidence="2">Single-pass type II membrane protein</topology>
    </subcellularLocation>
</comment>
<comment type="tissue specificity">
    <text evidence="5">Expressed in roots, hypocotyls, cotyledons, leaves, stems, stamens and pollen grains.</text>
</comment>
<comment type="similarity">
    <text evidence="7">Belongs to the glycosyltransferase 47 family.</text>
</comment>
<dbReference type="EC" id="2.4.1.-" evidence="7"/>
<dbReference type="EMBL" id="KJ138742">
    <property type="protein sequence ID" value="AHL38682.1"/>
    <property type="molecule type" value="mRNA"/>
</dbReference>
<dbReference type="EMBL" id="AL033545">
    <property type="protein sequence ID" value="CAA22163.1"/>
    <property type="molecule type" value="Genomic_DNA"/>
</dbReference>
<dbReference type="EMBL" id="AL161557">
    <property type="protein sequence ID" value="CAB79213.1"/>
    <property type="molecule type" value="Genomic_DNA"/>
</dbReference>
<dbReference type="EMBL" id="CP002687">
    <property type="protein sequence ID" value="AEE84626.1"/>
    <property type="molecule type" value="Genomic_DNA"/>
</dbReference>
<dbReference type="EMBL" id="BT011242">
    <property type="protein sequence ID" value="AAR92278.1"/>
    <property type="molecule type" value="mRNA"/>
</dbReference>
<dbReference type="EMBL" id="BT012538">
    <property type="protein sequence ID" value="AAS99682.1"/>
    <property type="molecule type" value="mRNA"/>
</dbReference>
<dbReference type="EMBL" id="AK226490">
    <property type="protein sequence ID" value="BAE98632.1"/>
    <property type="molecule type" value="mRNA"/>
</dbReference>
<dbReference type="PIR" id="T05452">
    <property type="entry name" value="T05452"/>
</dbReference>
<dbReference type="RefSeq" id="NP_193989.1">
    <property type="nucleotide sequence ID" value="NM_118384.5"/>
</dbReference>
<dbReference type="FunCoup" id="Q9SUW1">
    <property type="interactions" value="248"/>
</dbReference>
<dbReference type="STRING" id="3702.Q9SUW1"/>
<dbReference type="CAZy" id="GT47">
    <property type="family name" value="Glycosyltransferase Family 47"/>
</dbReference>
<dbReference type="GlyCosmos" id="Q9SUW1">
    <property type="glycosylation" value="3 sites, No reported glycans"/>
</dbReference>
<dbReference type="GlyGen" id="Q9SUW1">
    <property type="glycosylation" value="3 sites"/>
</dbReference>
<dbReference type="PaxDb" id="3702-AT4G22580.1"/>
<dbReference type="ProteomicsDB" id="247190"/>
<dbReference type="EnsemblPlants" id="AT4G22580.1">
    <property type="protein sequence ID" value="AT4G22580.1"/>
    <property type="gene ID" value="AT4G22580"/>
</dbReference>
<dbReference type="GeneID" id="828354"/>
<dbReference type="Gramene" id="AT4G22580.1">
    <property type="protein sequence ID" value="AT4G22580.1"/>
    <property type="gene ID" value="AT4G22580"/>
</dbReference>
<dbReference type="KEGG" id="ath:AT4G22580"/>
<dbReference type="Araport" id="AT4G22580"/>
<dbReference type="TAIR" id="AT4G22580"/>
<dbReference type="eggNOG" id="KOG1021">
    <property type="taxonomic scope" value="Eukaryota"/>
</dbReference>
<dbReference type="HOGENOM" id="CLU_012659_4_1_1"/>
<dbReference type="InParanoid" id="Q9SUW1"/>
<dbReference type="OMA" id="ARAWPWQ"/>
<dbReference type="PhylomeDB" id="Q9SUW1"/>
<dbReference type="PRO" id="PR:Q9SUW1"/>
<dbReference type="Proteomes" id="UP000006548">
    <property type="component" value="Chromosome 4"/>
</dbReference>
<dbReference type="ExpressionAtlas" id="Q9SUW1">
    <property type="expression patterns" value="baseline and differential"/>
</dbReference>
<dbReference type="GO" id="GO:0000139">
    <property type="term" value="C:Golgi membrane"/>
    <property type="evidence" value="ECO:0007669"/>
    <property type="project" value="UniProtKB-SubCell"/>
</dbReference>
<dbReference type="GO" id="GO:0016757">
    <property type="term" value="F:glycosyltransferase activity"/>
    <property type="evidence" value="ECO:0007669"/>
    <property type="project" value="UniProtKB-KW"/>
</dbReference>
<dbReference type="GO" id="GO:0006486">
    <property type="term" value="P:protein glycosylation"/>
    <property type="evidence" value="ECO:0007669"/>
    <property type="project" value="InterPro"/>
</dbReference>
<dbReference type="InterPro" id="IPR004263">
    <property type="entry name" value="Exostosin"/>
</dbReference>
<dbReference type="InterPro" id="IPR040911">
    <property type="entry name" value="Exostosin_GT47"/>
</dbReference>
<dbReference type="PANTHER" id="PTHR11062">
    <property type="entry name" value="EXOSTOSIN HEPARAN SULFATE GLYCOSYLTRANSFERASE -RELATED"/>
    <property type="match status" value="1"/>
</dbReference>
<dbReference type="PANTHER" id="PTHR11062:SF58">
    <property type="entry name" value="XYLOGLUCAN GALACTOSYLTRANSFERASE GT19-RELATED"/>
    <property type="match status" value="1"/>
</dbReference>
<dbReference type="Pfam" id="PF03016">
    <property type="entry name" value="Exostosin_GT47"/>
    <property type="match status" value="1"/>
</dbReference>
<name>GT19_ARATH</name>
<proteinExistence type="evidence at transcript level"/>
<evidence type="ECO:0000250" key="1">
    <source>
        <dbReference type="UniProtKB" id="F4K6F1"/>
    </source>
</evidence>
<evidence type="ECO:0000250" key="2">
    <source>
        <dbReference type="UniProtKB" id="Q7XJ98"/>
    </source>
</evidence>
<evidence type="ECO:0000255" key="3"/>
<evidence type="ECO:0000255" key="4">
    <source>
        <dbReference type="PROSITE-ProRule" id="PRU00498"/>
    </source>
</evidence>
<evidence type="ECO:0000269" key="5">
    <source>
    </source>
</evidence>
<evidence type="ECO:0000303" key="6">
    <source>
    </source>
</evidence>
<evidence type="ECO:0000305" key="7"/>
<evidence type="ECO:0000312" key="8">
    <source>
        <dbReference type="Araport" id="AT4G22580"/>
    </source>
</evidence>
<gene>
    <name evidence="6" type="primary">GT19</name>
    <name evidence="8" type="ordered locus">At4g22580</name>
</gene>
<sequence length="435" mass="50361">MASKSTVTTLTIFFFFFFFFIEPKVQSQQISAVDSECTNRWIHIRTLPSRFNLDLLSTCNRYPITDDLCPYLANHGLGPKTHTRTRSWYRTDPLLLELIFHRRILEYPCLTPDPNLASAIYLPYYAGIDSLRYLYGPDLNSSADHGSDLLEFLTRDQPEIWSRRSGHDHFLVMARPAWDFSQPLTVDPPIWGTSFLERREFFNLTALTLESRYWPWQEQAVPYPTSFHPHSLPFLESWIRRVRRSRRTSLMLFAGGGGTSSSPNIRRSIRLECTSINATQSDNKICDFVDCSNGICEHDPIRFMRPMLQSSFCLQPPGDTPTRKATFDGIIAGCIPVFFEDQTAKMQYKWHLPESEFAEFSVTIPKEDVVFRGVRIQDVLMSIPKEEVTRMRERVIEMMPRVMYRRHGASMGLMNKKDAVDIAIDGVLDRIISRV</sequence>
<keyword id="KW-0325">Glycoprotein</keyword>
<keyword id="KW-0328">Glycosyltransferase</keyword>
<keyword id="KW-0333">Golgi apparatus</keyword>
<keyword id="KW-0472">Membrane</keyword>
<keyword id="KW-1185">Reference proteome</keyword>
<keyword id="KW-0735">Signal-anchor</keyword>
<keyword id="KW-0808">Transferase</keyword>
<keyword id="KW-0812">Transmembrane</keyword>
<keyword id="KW-1133">Transmembrane helix</keyword>
<accession>Q9SUW1</accession>
<organism>
    <name type="scientific">Arabidopsis thaliana</name>
    <name type="common">Mouse-ear cress</name>
    <dbReference type="NCBI Taxonomy" id="3702"/>
    <lineage>
        <taxon>Eukaryota</taxon>
        <taxon>Viridiplantae</taxon>
        <taxon>Streptophyta</taxon>
        <taxon>Embryophyta</taxon>
        <taxon>Tracheophyta</taxon>
        <taxon>Spermatophyta</taxon>
        <taxon>Magnoliopsida</taxon>
        <taxon>eudicotyledons</taxon>
        <taxon>Gunneridae</taxon>
        <taxon>Pentapetalae</taxon>
        <taxon>rosids</taxon>
        <taxon>malvids</taxon>
        <taxon>Brassicales</taxon>
        <taxon>Brassicaceae</taxon>
        <taxon>Camelineae</taxon>
        <taxon>Arabidopsis</taxon>
    </lineage>
</organism>
<protein>
    <recommendedName>
        <fullName evidence="7">Probable xyloglucan galactosyltransferase GT19</fullName>
        <ecNumber evidence="7">2.4.1.-</ecNumber>
    </recommendedName>
    <alternativeName>
        <fullName evidence="6">Glycosyltransferase 19</fullName>
        <shortName evidence="6">AtGT19</shortName>
    </alternativeName>
</protein>
<feature type="chain" id="PRO_0000436000" description="Probable xyloglucan galactosyltransferase GT19">
    <location>
        <begin position="1"/>
        <end position="435"/>
    </location>
</feature>
<feature type="topological domain" description="Cytoplasmic" evidence="7">
    <location>
        <begin position="1"/>
        <end position="6"/>
    </location>
</feature>
<feature type="transmembrane region" description="Helical; Signal-anchor for type II membrane protein" evidence="3">
    <location>
        <begin position="7"/>
        <end position="23"/>
    </location>
</feature>
<feature type="topological domain" description="Lumenal" evidence="7">
    <location>
        <begin position="24"/>
        <end position="435"/>
    </location>
</feature>
<feature type="glycosylation site" description="N-linked (GlcNAc...) asparagine" evidence="4">
    <location>
        <position position="140"/>
    </location>
</feature>
<feature type="glycosylation site" description="N-linked (GlcNAc...) asparagine" evidence="4">
    <location>
        <position position="203"/>
    </location>
</feature>
<feature type="glycosylation site" description="N-linked (GlcNAc...) asparagine" evidence="4">
    <location>
        <position position="277"/>
    </location>
</feature>